<gene>
    <name evidence="1" type="primary">tig</name>
    <name type="ordered locus">ECP_0497</name>
</gene>
<proteinExistence type="inferred from homology"/>
<comment type="function">
    <text evidence="1">Involved in protein export. Acts as a chaperone by maintaining the newly synthesized protein in an open conformation. Functions as a peptidyl-prolyl cis-trans isomerase.</text>
</comment>
<comment type="catalytic activity">
    <reaction evidence="1">
        <text>[protein]-peptidylproline (omega=180) = [protein]-peptidylproline (omega=0)</text>
        <dbReference type="Rhea" id="RHEA:16237"/>
        <dbReference type="Rhea" id="RHEA-COMP:10747"/>
        <dbReference type="Rhea" id="RHEA-COMP:10748"/>
        <dbReference type="ChEBI" id="CHEBI:83833"/>
        <dbReference type="ChEBI" id="CHEBI:83834"/>
        <dbReference type="EC" id="5.2.1.8"/>
    </reaction>
</comment>
<comment type="subunit">
    <text evidence="1">Homodimer and monomer. In vivo most of the ribosomes are in complex with monomeric TF. Uncomplexed TF, however, is in a monomer-dimer equilibrium with approximately two thirds of TF existing in a dimeric state.</text>
</comment>
<comment type="subcellular location">
    <subcellularLocation>
        <location>Cytoplasm</location>
    </subcellularLocation>
    <text evidence="1">About half TF is bound to the ribosome near the polypeptide exit tunnel while the other half is free in the cytoplasm.</text>
</comment>
<comment type="domain">
    <text evidence="1">Consists of 3 domains; the N-terminus binds the ribosome, the middle domain has PPIase activity, while the C-terminus has intrinsic chaperone activity on its own.</text>
</comment>
<comment type="similarity">
    <text evidence="1">Belongs to the FKBP-type PPIase family. Tig subfamily.</text>
</comment>
<dbReference type="EC" id="5.2.1.8" evidence="1"/>
<dbReference type="EMBL" id="CP000247">
    <property type="protein sequence ID" value="ABG68526.1"/>
    <property type="molecule type" value="Genomic_DNA"/>
</dbReference>
<dbReference type="RefSeq" id="WP_001198388.1">
    <property type="nucleotide sequence ID" value="NC_008253.1"/>
</dbReference>
<dbReference type="SMR" id="Q0TKK5"/>
<dbReference type="KEGG" id="ecp:ECP_0497"/>
<dbReference type="HOGENOM" id="CLU_033058_2_0_6"/>
<dbReference type="Proteomes" id="UP000009182">
    <property type="component" value="Chromosome"/>
</dbReference>
<dbReference type="GO" id="GO:0005737">
    <property type="term" value="C:cytoplasm"/>
    <property type="evidence" value="ECO:0007669"/>
    <property type="project" value="UniProtKB-SubCell"/>
</dbReference>
<dbReference type="GO" id="GO:0003755">
    <property type="term" value="F:peptidyl-prolyl cis-trans isomerase activity"/>
    <property type="evidence" value="ECO:0007669"/>
    <property type="project" value="UniProtKB-UniRule"/>
</dbReference>
<dbReference type="GO" id="GO:0044183">
    <property type="term" value="F:protein folding chaperone"/>
    <property type="evidence" value="ECO:0007669"/>
    <property type="project" value="TreeGrafter"/>
</dbReference>
<dbReference type="GO" id="GO:0043022">
    <property type="term" value="F:ribosome binding"/>
    <property type="evidence" value="ECO:0007669"/>
    <property type="project" value="TreeGrafter"/>
</dbReference>
<dbReference type="GO" id="GO:0051083">
    <property type="term" value="P:'de novo' cotranslational protein folding"/>
    <property type="evidence" value="ECO:0007669"/>
    <property type="project" value="TreeGrafter"/>
</dbReference>
<dbReference type="GO" id="GO:0051301">
    <property type="term" value="P:cell division"/>
    <property type="evidence" value="ECO:0007669"/>
    <property type="project" value="UniProtKB-KW"/>
</dbReference>
<dbReference type="GO" id="GO:0061077">
    <property type="term" value="P:chaperone-mediated protein folding"/>
    <property type="evidence" value="ECO:0007669"/>
    <property type="project" value="TreeGrafter"/>
</dbReference>
<dbReference type="GO" id="GO:0015031">
    <property type="term" value="P:protein transport"/>
    <property type="evidence" value="ECO:0007669"/>
    <property type="project" value="UniProtKB-UniRule"/>
</dbReference>
<dbReference type="GO" id="GO:0043335">
    <property type="term" value="P:protein unfolding"/>
    <property type="evidence" value="ECO:0007669"/>
    <property type="project" value="TreeGrafter"/>
</dbReference>
<dbReference type="FunFam" id="1.10.3120.10:FF:000001">
    <property type="entry name" value="Trigger factor"/>
    <property type="match status" value="1"/>
</dbReference>
<dbReference type="FunFam" id="3.10.50.40:FF:000001">
    <property type="entry name" value="Trigger factor"/>
    <property type="match status" value="1"/>
</dbReference>
<dbReference type="FunFam" id="3.30.70.1050:FF:000001">
    <property type="entry name" value="Trigger factor"/>
    <property type="match status" value="1"/>
</dbReference>
<dbReference type="Gene3D" id="3.10.50.40">
    <property type="match status" value="1"/>
</dbReference>
<dbReference type="Gene3D" id="3.30.70.1050">
    <property type="entry name" value="Trigger factor ribosome-binding domain"/>
    <property type="match status" value="1"/>
</dbReference>
<dbReference type="Gene3D" id="1.10.3120.10">
    <property type="entry name" value="Trigger factor, C-terminal domain"/>
    <property type="match status" value="1"/>
</dbReference>
<dbReference type="HAMAP" id="MF_00303">
    <property type="entry name" value="Trigger_factor_Tig"/>
    <property type="match status" value="1"/>
</dbReference>
<dbReference type="InterPro" id="IPR046357">
    <property type="entry name" value="PPIase_dom_sf"/>
</dbReference>
<dbReference type="InterPro" id="IPR001179">
    <property type="entry name" value="PPIase_FKBP_dom"/>
</dbReference>
<dbReference type="InterPro" id="IPR005215">
    <property type="entry name" value="Trig_fac"/>
</dbReference>
<dbReference type="InterPro" id="IPR008880">
    <property type="entry name" value="Trigger_fac_C"/>
</dbReference>
<dbReference type="InterPro" id="IPR037041">
    <property type="entry name" value="Trigger_fac_C_sf"/>
</dbReference>
<dbReference type="InterPro" id="IPR008881">
    <property type="entry name" value="Trigger_fac_ribosome-bd_bac"/>
</dbReference>
<dbReference type="InterPro" id="IPR036611">
    <property type="entry name" value="Trigger_fac_ribosome-bd_sf"/>
</dbReference>
<dbReference type="InterPro" id="IPR027304">
    <property type="entry name" value="Trigger_fact/SurA_dom_sf"/>
</dbReference>
<dbReference type="NCBIfam" id="TIGR00115">
    <property type="entry name" value="tig"/>
    <property type="match status" value="1"/>
</dbReference>
<dbReference type="PANTHER" id="PTHR30560">
    <property type="entry name" value="TRIGGER FACTOR CHAPERONE AND PEPTIDYL-PROLYL CIS/TRANS ISOMERASE"/>
    <property type="match status" value="1"/>
</dbReference>
<dbReference type="PANTHER" id="PTHR30560:SF3">
    <property type="entry name" value="TRIGGER FACTOR-LIKE PROTEIN TIG, CHLOROPLASTIC"/>
    <property type="match status" value="1"/>
</dbReference>
<dbReference type="Pfam" id="PF00254">
    <property type="entry name" value="FKBP_C"/>
    <property type="match status" value="1"/>
</dbReference>
<dbReference type="Pfam" id="PF05698">
    <property type="entry name" value="Trigger_C"/>
    <property type="match status" value="1"/>
</dbReference>
<dbReference type="Pfam" id="PF05697">
    <property type="entry name" value="Trigger_N"/>
    <property type="match status" value="1"/>
</dbReference>
<dbReference type="PIRSF" id="PIRSF003095">
    <property type="entry name" value="Trigger_factor"/>
    <property type="match status" value="1"/>
</dbReference>
<dbReference type="SUPFAM" id="SSF54534">
    <property type="entry name" value="FKBP-like"/>
    <property type="match status" value="1"/>
</dbReference>
<dbReference type="SUPFAM" id="SSF109998">
    <property type="entry name" value="Triger factor/SurA peptide-binding domain-like"/>
    <property type="match status" value="1"/>
</dbReference>
<dbReference type="SUPFAM" id="SSF102735">
    <property type="entry name" value="Trigger factor ribosome-binding domain"/>
    <property type="match status" value="1"/>
</dbReference>
<dbReference type="PROSITE" id="PS50059">
    <property type="entry name" value="FKBP_PPIASE"/>
    <property type="match status" value="1"/>
</dbReference>
<organism>
    <name type="scientific">Escherichia coli O6:K15:H31 (strain 536 / UPEC)</name>
    <dbReference type="NCBI Taxonomy" id="362663"/>
    <lineage>
        <taxon>Bacteria</taxon>
        <taxon>Pseudomonadati</taxon>
        <taxon>Pseudomonadota</taxon>
        <taxon>Gammaproteobacteria</taxon>
        <taxon>Enterobacterales</taxon>
        <taxon>Enterobacteriaceae</taxon>
        <taxon>Escherichia</taxon>
    </lineage>
</organism>
<sequence length="432" mass="48251">MQVSVETTQGLGRRVTITIAADSIETAVKSELVNVAKKVRIDGFRKGKVPMNIVAQRYGASVRQDVLGDLMSRNFIDAIIKEKINPAGAPTYVPGEYKLGEDFTYSVEFEVYPEVELQGLEAIEVEKPIVEVTDADVDGMLDTLRKQQATWKEKDGAVEAEDRVTIDFTGSVDGEEFEGGKASDFVLAMGQGRMIPGFEDGIKGHKAGEEFTIDVTFPEEYHAENLKGKAAKFAINLKKVEERELPELTEEFIKRFGVEDGSVEGLRAEVRKNMERELKSAIRNRVKSQAIEGLVKANDIDVPAALIDSEIDVLRRQAAQRFGGNEKQALELPRELFEEQAKRRVVVGLLLGEVIRTNELKADEERVKGLIEEMASAYEDPKEVIEFYSKNKELMDNMRNVALEEQAVEAVLAKAKVTEKETTFNELMNQQA</sequence>
<name>TIG_ECOL5</name>
<feature type="chain" id="PRO_0000256559" description="Trigger factor">
    <location>
        <begin position="1"/>
        <end position="432"/>
    </location>
</feature>
<feature type="domain" description="PPIase FKBP-type" evidence="1">
    <location>
        <begin position="161"/>
        <end position="246"/>
    </location>
</feature>
<keyword id="KW-0131">Cell cycle</keyword>
<keyword id="KW-0132">Cell division</keyword>
<keyword id="KW-0143">Chaperone</keyword>
<keyword id="KW-0963">Cytoplasm</keyword>
<keyword id="KW-0413">Isomerase</keyword>
<keyword id="KW-0697">Rotamase</keyword>
<reference key="1">
    <citation type="journal article" date="2006" name="Mol. Microbiol.">
        <title>Role of pathogenicity island-associated integrases in the genome plasticity of uropathogenic Escherichia coli strain 536.</title>
        <authorList>
            <person name="Hochhut B."/>
            <person name="Wilde C."/>
            <person name="Balling G."/>
            <person name="Middendorf B."/>
            <person name="Dobrindt U."/>
            <person name="Brzuszkiewicz E."/>
            <person name="Gottschalk G."/>
            <person name="Carniel E."/>
            <person name="Hacker J."/>
        </authorList>
    </citation>
    <scope>NUCLEOTIDE SEQUENCE [LARGE SCALE GENOMIC DNA]</scope>
    <source>
        <strain>536 / UPEC</strain>
    </source>
</reference>
<protein>
    <recommendedName>
        <fullName evidence="1">Trigger factor</fullName>
        <shortName evidence="1">TF</shortName>
        <ecNumber evidence="1">5.2.1.8</ecNumber>
    </recommendedName>
    <alternativeName>
        <fullName evidence="1">PPIase</fullName>
    </alternativeName>
</protein>
<accession>Q0TKK5</accession>
<evidence type="ECO:0000255" key="1">
    <source>
        <dbReference type="HAMAP-Rule" id="MF_00303"/>
    </source>
</evidence>